<proteinExistence type="evidence at transcript level"/>
<protein>
    <recommendedName>
        <fullName>Ubiquitin-conjugating enzyme E2 2</fullName>
        <ecNumber>2.3.2.23</ecNumber>
    </recommendedName>
    <alternativeName>
        <fullName>E2 ubiquitin-conjugating enzyme 2</fullName>
    </alternativeName>
    <alternativeName>
        <fullName>Ubiquitin carrier protein UBC2</fullName>
    </alternativeName>
    <alternativeName>
        <fullName>Ubiquitin-protein ligase UBC2</fullName>
    </alternativeName>
</protein>
<accession>Q58FS2</accession>
<organism>
    <name type="scientific">Trichoderma harzianum</name>
    <name type="common">Hypocrea lixii</name>
    <dbReference type="NCBI Taxonomy" id="5544"/>
    <lineage>
        <taxon>Eukaryota</taxon>
        <taxon>Fungi</taxon>
        <taxon>Dikarya</taxon>
        <taxon>Ascomycota</taxon>
        <taxon>Pezizomycotina</taxon>
        <taxon>Sordariomycetes</taxon>
        <taxon>Hypocreomycetidae</taxon>
        <taxon>Hypocreales</taxon>
        <taxon>Hypocreaceae</taxon>
        <taxon>Trichoderma</taxon>
    </lineage>
</organism>
<name>UBC2_TRIHA</name>
<gene>
    <name type="primary">UBC2</name>
</gene>
<evidence type="ECO:0000250" key="1">
    <source>
        <dbReference type="UniProtKB" id="Q5VVX9"/>
    </source>
</evidence>
<evidence type="ECO:0000255" key="2">
    <source>
        <dbReference type="PROSITE-ProRule" id="PRU00388"/>
    </source>
</evidence>
<evidence type="ECO:0000255" key="3">
    <source>
        <dbReference type="PROSITE-ProRule" id="PRU10133"/>
    </source>
</evidence>
<sequence>MSTAARRRLMRDFKRMQTDPPAGVSASPIPDNVMTWNAVIIGPADTPFEDGTFRLVMQFEEQYPNKPPQVKFISQMFHPNVYANGELCLDILQNRWSPTYDVAAVLTSIQSLLNDPNTGSPANVEASNLYKDNRREYIKRVRETVERSWED</sequence>
<reference key="1">
    <citation type="submission" date="2005-03" db="EMBL/GenBank/DDBJ databases">
        <title>Cloning and Sequence Analysis of the Ubiquitin-conjugating enzyme Gene from Trichoderma harzianum.</title>
        <authorList>
            <person name="Yang Q."/>
            <person name="Liu P."/>
            <person name="Yang L."/>
        </authorList>
    </citation>
    <scope>NUCLEOTIDE SEQUENCE [MRNA]</scope>
    <source>
        <strain>HZMA5313</strain>
    </source>
</reference>
<comment type="function">
    <text evidence="2">Catalyzes the covalent attachment of ubiquitin to other proteins. Plays a role in transcription regulation by catalyzing the monoubiquitination of histone H2B to form H2BK123ub1. H2BK123ub1 gives a specific tag for epigenetic transcriptional activation and is also a prerequisite for H3K4me and H3K79me formation. Also involved in postreplication repair of UV-damaged DNA, in N-end rule-dependent protein degradation and in sporulation.</text>
</comment>
<comment type="catalytic activity">
    <reaction evidence="2 3">
        <text>S-ubiquitinyl-[E1 ubiquitin-activating enzyme]-L-cysteine + [E2 ubiquitin-conjugating enzyme]-L-cysteine = [E1 ubiquitin-activating enzyme]-L-cysteine + S-ubiquitinyl-[E2 ubiquitin-conjugating enzyme]-L-cysteine.</text>
        <dbReference type="EC" id="2.3.2.23"/>
    </reaction>
</comment>
<comment type="pathway">
    <text evidence="2">Protein modification; protein ubiquitination.</text>
</comment>
<comment type="subcellular location">
    <subcellularLocation>
        <location evidence="1">Cytoplasm</location>
    </subcellularLocation>
    <subcellularLocation>
        <location evidence="1">Nucleus</location>
    </subcellularLocation>
</comment>
<comment type="similarity">
    <text evidence="2">Belongs to the ubiquitin-conjugating enzyme family.</text>
</comment>
<feature type="chain" id="PRO_0000082537" description="Ubiquitin-conjugating enzyme E2 2">
    <location>
        <begin position="1"/>
        <end position="151"/>
    </location>
</feature>
<feature type="domain" description="UBC core" evidence="2">
    <location>
        <begin position="4"/>
        <end position="150"/>
    </location>
</feature>
<feature type="active site" description="Glycyl thioester intermediate" evidence="2 3">
    <location>
        <position position="88"/>
    </location>
</feature>
<dbReference type="EC" id="2.3.2.23"/>
<dbReference type="EMBL" id="AY955083">
    <property type="protein sequence ID" value="AAX55621.1"/>
    <property type="molecule type" value="mRNA"/>
</dbReference>
<dbReference type="SMR" id="Q58FS2"/>
<dbReference type="UniPathway" id="UPA00143"/>
<dbReference type="GO" id="GO:0005737">
    <property type="term" value="C:cytoplasm"/>
    <property type="evidence" value="ECO:0007669"/>
    <property type="project" value="UniProtKB-SubCell"/>
</dbReference>
<dbReference type="GO" id="GO:0005634">
    <property type="term" value="C:nucleus"/>
    <property type="evidence" value="ECO:0007669"/>
    <property type="project" value="UniProtKB-SubCell"/>
</dbReference>
<dbReference type="GO" id="GO:0005524">
    <property type="term" value="F:ATP binding"/>
    <property type="evidence" value="ECO:0007669"/>
    <property type="project" value="UniProtKB-KW"/>
</dbReference>
<dbReference type="GO" id="GO:0061631">
    <property type="term" value="F:ubiquitin conjugating enzyme activity"/>
    <property type="evidence" value="ECO:0007669"/>
    <property type="project" value="UniProtKB-EC"/>
</dbReference>
<dbReference type="GO" id="GO:0006325">
    <property type="term" value="P:chromatin organization"/>
    <property type="evidence" value="ECO:0007669"/>
    <property type="project" value="UniProtKB-KW"/>
</dbReference>
<dbReference type="GO" id="GO:0006281">
    <property type="term" value="P:DNA repair"/>
    <property type="evidence" value="ECO:0007669"/>
    <property type="project" value="UniProtKB-KW"/>
</dbReference>
<dbReference type="GO" id="GO:0016567">
    <property type="term" value="P:protein ubiquitination"/>
    <property type="evidence" value="ECO:0007669"/>
    <property type="project" value="UniProtKB-UniPathway"/>
</dbReference>
<dbReference type="GO" id="GO:0030435">
    <property type="term" value="P:sporulation resulting in formation of a cellular spore"/>
    <property type="evidence" value="ECO:0007669"/>
    <property type="project" value="UniProtKB-KW"/>
</dbReference>
<dbReference type="CDD" id="cd23790">
    <property type="entry name" value="UBCc_UBE2A_2B"/>
    <property type="match status" value="1"/>
</dbReference>
<dbReference type="FunFam" id="3.10.110.10:FF:000007">
    <property type="entry name" value="Ubiquitin-conjugating enzyme E2 2"/>
    <property type="match status" value="1"/>
</dbReference>
<dbReference type="Gene3D" id="3.10.110.10">
    <property type="entry name" value="Ubiquitin Conjugating Enzyme"/>
    <property type="match status" value="1"/>
</dbReference>
<dbReference type="InterPro" id="IPR050113">
    <property type="entry name" value="Ub_conjugating_enzyme"/>
</dbReference>
<dbReference type="InterPro" id="IPR000608">
    <property type="entry name" value="UBQ-conjugat_E2_core"/>
</dbReference>
<dbReference type="InterPro" id="IPR023313">
    <property type="entry name" value="UBQ-conjugating_AS"/>
</dbReference>
<dbReference type="InterPro" id="IPR016135">
    <property type="entry name" value="UBQ-conjugating_enzyme/RWD"/>
</dbReference>
<dbReference type="PANTHER" id="PTHR24067">
    <property type="entry name" value="UBIQUITIN-CONJUGATING ENZYME E2"/>
    <property type="match status" value="1"/>
</dbReference>
<dbReference type="Pfam" id="PF00179">
    <property type="entry name" value="UQ_con"/>
    <property type="match status" value="1"/>
</dbReference>
<dbReference type="SMART" id="SM00212">
    <property type="entry name" value="UBCc"/>
    <property type="match status" value="1"/>
</dbReference>
<dbReference type="SUPFAM" id="SSF54495">
    <property type="entry name" value="UBC-like"/>
    <property type="match status" value="1"/>
</dbReference>
<dbReference type="PROSITE" id="PS00183">
    <property type="entry name" value="UBC_1"/>
    <property type="match status" value="1"/>
</dbReference>
<dbReference type="PROSITE" id="PS50127">
    <property type="entry name" value="UBC_2"/>
    <property type="match status" value="1"/>
</dbReference>
<keyword id="KW-0067">ATP-binding</keyword>
<keyword id="KW-0156">Chromatin regulator</keyword>
<keyword id="KW-0963">Cytoplasm</keyword>
<keyword id="KW-0227">DNA damage</keyword>
<keyword id="KW-0234">DNA repair</keyword>
<keyword id="KW-0547">Nucleotide-binding</keyword>
<keyword id="KW-0539">Nucleus</keyword>
<keyword id="KW-0749">Sporulation</keyword>
<keyword id="KW-0804">Transcription</keyword>
<keyword id="KW-0805">Transcription regulation</keyword>
<keyword id="KW-0808">Transferase</keyword>
<keyword id="KW-0833">Ubl conjugation pathway</keyword>